<accession>Q92Z36</accession>
<name>NAPA_RHIME</name>
<evidence type="ECO:0000255" key="1">
    <source>
        <dbReference type="HAMAP-Rule" id="MF_01630"/>
    </source>
</evidence>
<proteinExistence type="inferred from homology"/>
<keyword id="KW-0004">4Fe-4S</keyword>
<keyword id="KW-0249">Electron transport</keyword>
<keyword id="KW-0408">Iron</keyword>
<keyword id="KW-0411">Iron-sulfur</keyword>
<keyword id="KW-0479">Metal-binding</keyword>
<keyword id="KW-0500">Molybdenum</keyword>
<keyword id="KW-0534">Nitrate assimilation</keyword>
<keyword id="KW-0560">Oxidoreductase</keyword>
<keyword id="KW-0574">Periplasm</keyword>
<keyword id="KW-0614">Plasmid</keyword>
<keyword id="KW-1185">Reference proteome</keyword>
<keyword id="KW-0732">Signal</keyword>
<keyword id="KW-0813">Transport</keyword>
<dbReference type="EC" id="1.9.6.1" evidence="1"/>
<dbReference type="EMBL" id="AE006469">
    <property type="protein sequence ID" value="AAK65332.1"/>
    <property type="molecule type" value="Genomic_DNA"/>
</dbReference>
<dbReference type="PIR" id="B95346">
    <property type="entry name" value="B95346"/>
</dbReference>
<dbReference type="RefSeq" id="NP_435920.1">
    <property type="nucleotide sequence ID" value="NC_003037.1"/>
</dbReference>
<dbReference type="RefSeq" id="WP_010967653.1">
    <property type="nucleotide sequence ID" value="NC_003037.1"/>
</dbReference>
<dbReference type="SMR" id="Q92Z36"/>
<dbReference type="EnsemblBacteria" id="AAK65332">
    <property type="protein sequence ID" value="AAK65332"/>
    <property type="gene ID" value="SMa1236"/>
</dbReference>
<dbReference type="GeneID" id="89572464"/>
<dbReference type="KEGG" id="sme:SMa1236"/>
<dbReference type="PATRIC" id="fig|266834.11.peg.694"/>
<dbReference type="HOGENOM" id="CLU_000422_13_4_5"/>
<dbReference type="OrthoDB" id="9816402at2"/>
<dbReference type="PRO" id="PR:Q92Z36"/>
<dbReference type="Proteomes" id="UP000001976">
    <property type="component" value="Plasmid pSymA"/>
</dbReference>
<dbReference type="GO" id="GO:0016020">
    <property type="term" value="C:membrane"/>
    <property type="evidence" value="ECO:0007669"/>
    <property type="project" value="TreeGrafter"/>
</dbReference>
<dbReference type="GO" id="GO:0009325">
    <property type="term" value="C:nitrate reductase complex"/>
    <property type="evidence" value="ECO:0007669"/>
    <property type="project" value="TreeGrafter"/>
</dbReference>
<dbReference type="GO" id="GO:0042597">
    <property type="term" value="C:periplasmic space"/>
    <property type="evidence" value="ECO:0007669"/>
    <property type="project" value="UniProtKB-SubCell"/>
</dbReference>
<dbReference type="GO" id="GO:0051539">
    <property type="term" value="F:4 iron, 4 sulfur cluster binding"/>
    <property type="evidence" value="ECO:0007669"/>
    <property type="project" value="UniProtKB-KW"/>
</dbReference>
<dbReference type="GO" id="GO:0009055">
    <property type="term" value="F:electron transfer activity"/>
    <property type="evidence" value="ECO:0007669"/>
    <property type="project" value="UniProtKB-UniRule"/>
</dbReference>
<dbReference type="GO" id="GO:0005506">
    <property type="term" value="F:iron ion binding"/>
    <property type="evidence" value="ECO:0007669"/>
    <property type="project" value="UniProtKB-UniRule"/>
</dbReference>
<dbReference type="GO" id="GO:0030151">
    <property type="term" value="F:molybdenum ion binding"/>
    <property type="evidence" value="ECO:0007669"/>
    <property type="project" value="InterPro"/>
</dbReference>
<dbReference type="GO" id="GO:0043546">
    <property type="term" value="F:molybdopterin cofactor binding"/>
    <property type="evidence" value="ECO:0007669"/>
    <property type="project" value="InterPro"/>
</dbReference>
<dbReference type="GO" id="GO:0050140">
    <property type="term" value="F:nitrate reductase (cytochrome) activity"/>
    <property type="evidence" value="ECO:0007669"/>
    <property type="project" value="UniProtKB-EC"/>
</dbReference>
<dbReference type="GO" id="GO:0045333">
    <property type="term" value="P:cellular respiration"/>
    <property type="evidence" value="ECO:0007669"/>
    <property type="project" value="UniProtKB-ARBA"/>
</dbReference>
<dbReference type="GO" id="GO:0006777">
    <property type="term" value="P:Mo-molybdopterin cofactor biosynthetic process"/>
    <property type="evidence" value="ECO:0007669"/>
    <property type="project" value="UniProtKB-UniRule"/>
</dbReference>
<dbReference type="GO" id="GO:0042128">
    <property type="term" value="P:nitrate assimilation"/>
    <property type="evidence" value="ECO:0007669"/>
    <property type="project" value="UniProtKB-UniRule"/>
</dbReference>
<dbReference type="CDD" id="cd02791">
    <property type="entry name" value="MopB_CT_Nitrate-R-NapA-like"/>
    <property type="match status" value="1"/>
</dbReference>
<dbReference type="CDD" id="cd02754">
    <property type="entry name" value="MopB_Nitrate-R-NapA-like"/>
    <property type="match status" value="1"/>
</dbReference>
<dbReference type="FunFam" id="2.40.40.20:FF:000005">
    <property type="entry name" value="Periplasmic nitrate reductase"/>
    <property type="match status" value="1"/>
</dbReference>
<dbReference type="Gene3D" id="2.40.40.20">
    <property type="match status" value="1"/>
</dbReference>
<dbReference type="Gene3D" id="3.30.200.210">
    <property type="match status" value="1"/>
</dbReference>
<dbReference type="Gene3D" id="3.40.50.740">
    <property type="match status" value="1"/>
</dbReference>
<dbReference type="Gene3D" id="3.40.228.10">
    <property type="entry name" value="Dimethylsulfoxide Reductase, domain 2"/>
    <property type="match status" value="1"/>
</dbReference>
<dbReference type="HAMAP" id="MF_01630">
    <property type="entry name" value="Nitrate_reduct_NapA"/>
    <property type="match status" value="1"/>
</dbReference>
<dbReference type="InterPro" id="IPR009010">
    <property type="entry name" value="Asp_de-COase-like_dom_sf"/>
</dbReference>
<dbReference type="InterPro" id="IPR041957">
    <property type="entry name" value="CT_Nitrate-R-NapA-like"/>
</dbReference>
<dbReference type="InterPro" id="IPR006657">
    <property type="entry name" value="MoPterin_dinucl-bd_dom"/>
</dbReference>
<dbReference type="InterPro" id="IPR006656">
    <property type="entry name" value="Mopterin_OxRdtase"/>
</dbReference>
<dbReference type="InterPro" id="IPR006963">
    <property type="entry name" value="Mopterin_OxRdtase_4Fe-4S_dom"/>
</dbReference>
<dbReference type="InterPro" id="IPR027467">
    <property type="entry name" value="MopterinOxRdtase_cofactor_BS"/>
</dbReference>
<dbReference type="InterPro" id="IPR010051">
    <property type="entry name" value="Periplasm_NO3_reductase_lsu"/>
</dbReference>
<dbReference type="InterPro" id="IPR050123">
    <property type="entry name" value="Prok_molybdopt-oxidoreductase"/>
</dbReference>
<dbReference type="InterPro" id="IPR006311">
    <property type="entry name" value="TAT_signal"/>
</dbReference>
<dbReference type="NCBIfam" id="TIGR01706">
    <property type="entry name" value="NAPA"/>
    <property type="match status" value="1"/>
</dbReference>
<dbReference type="NCBIfam" id="NF010055">
    <property type="entry name" value="PRK13532.1"/>
    <property type="match status" value="1"/>
</dbReference>
<dbReference type="PANTHER" id="PTHR43105:SF11">
    <property type="entry name" value="PERIPLASMIC NITRATE REDUCTASE"/>
    <property type="match status" value="1"/>
</dbReference>
<dbReference type="PANTHER" id="PTHR43105">
    <property type="entry name" value="RESPIRATORY NITRATE REDUCTASE"/>
    <property type="match status" value="1"/>
</dbReference>
<dbReference type="Pfam" id="PF04879">
    <property type="entry name" value="Molybdop_Fe4S4"/>
    <property type="match status" value="1"/>
</dbReference>
<dbReference type="Pfam" id="PF00384">
    <property type="entry name" value="Molybdopterin"/>
    <property type="match status" value="1"/>
</dbReference>
<dbReference type="Pfam" id="PF01568">
    <property type="entry name" value="Molydop_binding"/>
    <property type="match status" value="1"/>
</dbReference>
<dbReference type="SMART" id="SM00926">
    <property type="entry name" value="Molybdop_Fe4S4"/>
    <property type="match status" value="1"/>
</dbReference>
<dbReference type="SUPFAM" id="SSF50692">
    <property type="entry name" value="ADC-like"/>
    <property type="match status" value="1"/>
</dbReference>
<dbReference type="SUPFAM" id="SSF53706">
    <property type="entry name" value="Formate dehydrogenase/DMSO reductase, domains 1-3"/>
    <property type="match status" value="1"/>
</dbReference>
<dbReference type="PROSITE" id="PS51669">
    <property type="entry name" value="4FE4S_MOW_BIS_MGD"/>
    <property type="match status" value="1"/>
</dbReference>
<dbReference type="PROSITE" id="PS00551">
    <property type="entry name" value="MOLYBDOPTERIN_PROK_1"/>
    <property type="match status" value="1"/>
</dbReference>
<dbReference type="PROSITE" id="PS51318">
    <property type="entry name" value="TAT"/>
    <property type="match status" value="1"/>
</dbReference>
<feature type="signal peptide" description="Tat-type signal" evidence="1">
    <location>
        <begin position="1"/>
        <end position="31"/>
    </location>
</feature>
<feature type="chain" id="PRO_0000045998" description="Periplasmic nitrate reductase" evidence="1">
    <location>
        <begin position="32"/>
        <end position="834"/>
    </location>
</feature>
<feature type="domain" description="4Fe-4S Mo/W bis-MGD-type" evidence="1">
    <location>
        <begin position="43"/>
        <end position="99"/>
    </location>
</feature>
<feature type="binding site" evidence="1">
    <location>
        <position position="50"/>
    </location>
    <ligand>
        <name>[4Fe-4S] cluster</name>
        <dbReference type="ChEBI" id="CHEBI:49883"/>
    </ligand>
</feature>
<feature type="binding site" evidence="1">
    <location>
        <position position="53"/>
    </location>
    <ligand>
        <name>[4Fe-4S] cluster</name>
        <dbReference type="ChEBI" id="CHEBI:49883"/>
    </ligand>
</feature>
<feature type="binding site" evidence="1">
    <location>
        <position position="57"/>
    </location>
    <ligand>
        <name>[4Fe-4S] cluster</name>
        <dbReference type="ChEBI" id="CHEBI:49883"/>
    </ligand>
</feature>
<feature type="binding site" evidence="1">
    <location>
        <position position="85"/>
    </location>
    <ligand>
        <name>[4Fe-4S] cluster</name>
        <dbReference type="ChEBI" id="CHEBI:49883"/>
    </ligand>
</feature>
<feature type="binding site" evidence="1">
    <location>
        <position position="87"/>
    </location>
    <ligand>
        <name>Mo-bis(molybdopterin guanine dinucleotide)</name>
        <dbReference type="ChEBI" id="CHEBI:60539"/>
    </ligand>
</feature>
<feature type="binding site" evidence="1">
    <location>
        <position position="154"/>
    </location>
    <ligand>
        <name>Mo-bis(molybdopterin guanine dinucleotide)</name>
        <dbReference type="ChEBI" id="CHEBI:60539"/>
    </ligand>
</feature>
<feature type="binding site" evidence="1">
    <location>
        <position position="179"/>
    </location>
    <ligand>
        <name>Mo-bis(molybdopterin guanine dinucleotide)</name>
        <dbReference type="ChEBI" id="CHEBI:60539"/>
    </ligand>
</feature>
<feature type="binding site" evidence="1">
    <location>
        <position position="183"/>
    </location>
    <ligand>
        <name>Mo-bis(molybdopterin guanine dinucleotide)</name>
        <dbReference type="ChEBI" id="CHEBI:60539"/>
    </ligand>
</feature>
<feature type="binding site" evidence="1">
    <location>
        <begin position="216"/>
        <end position="223"/>
    </location>
    <ligand>
        <name>Mo-bis(molybdopterin guanine dinucleotide)</name>
        <dbReference type="ChEBI" id="CHEBI:60539"/>
    </ligand>
</feature>
<feature type="binding site" evidence="1">
    <location>
        <begin position="247"/>
        <end position="251"/>
    </location>
    <ligand>
        <name>Mo-bis(molybdopterin guanine dinucleotide)</name>
        <dbReference type="ChEBI" id="CHEBI:60539"/>
    </ligand>
</feature>
<feature type="binding site" evidence="1">
    <location>
        <begin position="266"/>
        <end position="268"/>
    </location>
    <ligand>
        <name>Mo-bis(molybdopterin guanine dinucleotide)</name>
        <dbReference type="ChEBI" id="CHEBI:60539"/>
    </ligand>
</feature>
<feature type="binding site" evidence="1">
    <location>
        <position position="377"/>
    </location>
    <ligand>
        <name>Mo-bis(molybdopterin guanine dinucleotide)</name>
        <dbReference type="ChEBI" id="CHEBI:60539"/>
    </ligand>
</feature>
<feature type="binding site" evidence="1">
    <location>
        <position position="381"/>
    </location>
    <ligand>
        <name>Mo-bis(molybdopterin guanine dinucleotide)</name>
        <dbReference type="ChEBI" id="CHEBI:60539"/>
    </ligand>
</feature>
<feature type="binding site" evidence="1">
    <location>
        <position position="487"/>
    </location>
    <ligand>
        <name>Mo-bis(molybdopterin guanine dinucleotide)</name>
        <dbReference type="ChEBI" id="CHEBI:60539"/>
    </ligand>
</feature>
<feature type="binding site" evidence="1">
    <location>
        <begin position="513"/>
        <end position="514"/>
    </location>
    <ligand>
        <name>Mo-bis(molybdopterin guanine dinucleotide)</name>
        <dbReference type="ChEBI" id="CHEBI:60539"/>
    </ligand>
</feature>
<feature type="binding site" evidence="1">
    <location>
        <position position="536"/>
    </location>
    <ligand>
        <name>Mo-bis(molybdopterin guanine dinucleotide)</name>
        <dbReference type="ChEBI" id="CHEBI:60539"/>
    </ligand>
</feature>
<feature type="binding site" evidence="1">
    <location>
        <position position="563"/>
    </location>
    <ligand>
        <name>Mo-bis(molybdopterin guanine dinucleotide)</name>
        <dbReference type="ChEBI" id="CHEBI:60539"/>
    </ligand>
</feature>
<feature type="binding site" evidence="1">
    <location>
        <begin position="723"/>
        <end position="732"/>
    </location>
    <ligand>
        <name>Mo-bis(molybdopterin guanine dinucleotide)</name>
        <dbReference type="ChEBI" id="CHEBI:60539"/>
    </ligand>
</feature>
<feature type="binding site" evidence="1">
    <location>
        <position position="799"/>
    </location>
    <ligand>
        <name>substrate</name>
    </ligand>
</feature>
<feature type="binding site" evidence="1">
    <location>
        <position position="807"/>
    </location>
    <ligand>
        <name>Mo-bis(molybdopterin guanine dinucleotide)</name>
        <dbReference type="ChEBI" id="CHEBI:60539"/>
    </ligand>
</feature>
<feature type="binding site" evidence="1">
    <location>
        <position position="824"/>
    </location>
    <ligand>
        <name>Mo-bis(molybdopterin guanine dinucleotide)</name>
        <dbReference type="ChEBI" id="CHEBI:60539"/>
    </ligand>
</feature>
<gene>
    <name evidence="1" type="primary">napA</name>
    <name type="ordered locus">RA0674</name>
    <name type="ORF">SMa1236</name>
</gene>
<sequence length="834" mass="93247">MTGELTRREMLKAHAAGIAAATAGIALPAAAQPVPGGVEALQITWSKAPCRFCGTGCGVMVGVKEGQVVATHGDMQAEVNRGLNCIKGYFLSKIMYGTDRLKTPLLRKRNGAFAKDGEFEPVSWDEAFDVMAEQAKKVLKDKGPTAVGMFGSGQWTIFEGYAATKLMRAGFRSNNLDPNARHCMASAAYAFMRTFGMDEPMGCYDDFEHADAFVLWGSNMAEMHPILWTRLADRRLGHEHVKVAVLSTFTHRSMDLADIPIVFKPGTDLAILNYIANHIIQTGRVNEDFVRKHTTFMVGATDIGYGLRPDNPLEVKAVNAKDAAKMTPSDFESFKSFVSEYTLDKVVELTGVEAGFLEQLADLYADPKRKVMSLWTMGFNQHVRGVWVNQMVYNLHLLTGKISEPGNSPFSLTGQPSACGTAREVGTFAHRLPADMTVTNPEHRKHAEEIWRIPHGIIPEKPGYHAVEQDRMLKDGKLNFYWVQVNNNVQAAPNTQNETYQGYRNPDNFIVVSDVYPTITAMSADLILPAAMWVEKEGAYGNAERRTHVWHQLVDAPGEARSDLWQMVEFSKRFTTDEVWSTDILDANPGYRGKTLYDVLFKNGNVDSFPASEINKEYANREAEAFGFYIQKGLFEEYASFGRGHGHDLAPYDRYHDERGLRWPVVDGKETLWRYREGYDPYVKPGEGVKFYGRPDGKAVILAVPYEPPAESPDDEYNVWLVTGRVLEHWHSGSMTMRVPELYKAFPGAVCFMNAGDARDRGINQGAEVRIVSRRGEIRARVETRGRNRMPPGVIFVPWFDASRLINKVTLDATDPISKQTDFKKCAVKIVSVA</sequence>
<protein>
    <recommendedName>
        <fullName evidence="1">Periplasmic nitrate reductase</fullName>
        <ecNumber evidence="1">1.9.6.1</ecNumber>
    </recommendedName>
</protein>
<organism>
    <name type="scientific">Rhizobium meliloti (strain 1021)</name>
    <name type="common">Ensifer meliloti</name>
    <name type="synonym">Sinorhizobium meliloti</name>
    <dbReference type="NCBI Taxonomy" id="266834"/>
    <lineage>
        <taxon>Bacteria</taxon>
        <taxon>Pseudomonadati</taxon>
        <taxon>Pseudomonadota</taxon>
        <taxon>Alphaproteobacteria</taxon>
        <taxon>Hyphomicrobiales</taxon>
        <taxon>Rhizobiaceae</taxon>
        <taxon>Sinorhizobium/Ensifer group</taxon>
        <taxon>Sinorhizobium</taxon>
    </lineage>
</organism>
<geneLocation type="plasmid">
    <name>pSymA</name>
    <name>megaplasmid 1</name>
</geneLocation>
<comment type="function">
    <text evidence="1">Catalytic subunit of the periplasmic nitrate reductase complex NapAB. Receives electrons from NapB and catalyzes the reduction of nitrate to nitrite.</text>
</comment>
<comment type="catalytic activity">
    <reaction evidence="1">
        <text>2 Fe(II)-[cytochrome] + nitrate + 2 H(+) = 2 Fe(III)-[cytochrome] + nitrite + H2O</text>
        <dbReference type="Rhea" id="RHEA:12909"/>
        <dbReference type="Rhea" id="RHEA-COMP:11777"/>
        <dbReference type="Rhea" id="RHEA-COMP:11778"/>
        <dbReference type="ChEBI" id="CHEBI:15377"/>
        <dbReference type="ChEBI" id="CHEBI:15378"/>
        <dbReference type="ChEBI" id="CHEBI:16301"/>
        <dbReference type="ChEBI" id="CHEBI:17632"/>
        <dbReference type="ChEBI" id="CHEBI:29033"/>
        <dbReference type="ChEBI" id="CHEBI:29034"/>
        <dbReference type="EC" id="1.9.6.1"/>
    </reaction>
</comment>
<comment type="cofactor">
    <cofactor evidence="1">
        <name>[4Fe-4S] cluster</name>
        <dbReference type="ChEBI" id="CHEBI:49883"/>
    </cofactor>
    <text evidence="1">Binds 1 [4Fe-4S] cluster.</text>
</comment>
<comment type="cofactor">
    <cofactor evidence="1">
        <name>Mo-bis(molybdopterin guanine dinucleotide)</name>
        <dbReference type="ChEBI" id="CHEBI:60539"/>
    </cofactor>
    <text evidence="1">Binds 1 molybdenum-bis(molybdopterin guanine dinucleotide) (Mo-bis-MGD) cofactor per subunit.</text>
</comment>
<comment type="subunit">
    <text evidence="1">Component of the periplasmic nitrate reductase NapAB complex composed of NapA and NapB.</text>
</comment>
<comment type="subcellular location">
    <subcellularLocation>
        <location evidence="1">Periplasm</location>
    </subcellularLocation>
</comment>
<comment type="PTM">
    <text evidence="1">Predicted to be exported by the Tat system. The position of the signal peptide cleavage has not been experimentally proven.</text>
</comment>
<comment type="similarity">
    <text evidence="1">Belongs to the prokaryotic molybdopterin-containing oxidoreductase family. NasA/NapA/NarB subfamily.</text>
</comment>
<reference key="1">
    <citation type="journal article" date="2001" name="Proc. Natl. Acad. Sci. U.S.A.">
        <title>Nucleotide sequence and predicted functions of the entire Sinorhizobium meliloti pSymA megaplasmid.</title>
        <authorList>
            <person name="Barnett M.J."/>
            <person name="Fisher R.F."/>
            <person name="Jones T."/>
            <person name="Komp C."/>
            <person name="Abola A.P."/>
            <person name="Barloy-Hubler F."/>
            <person name="Bowser L."/>
            <person name="Capela D."/>
            <person name="Galibert F."/>
            <person name="Gouzy J."/>
            <person name="Gurjal M."/>
            <person name="Hong A."/>
            <person name="Huizar L."/>
            <person name="Hyman R.W."/>
            <person name="Kahn D."/>
            <person name="Kahn M.L."/>
            <person name="Kalman S."/>
            <person name="Keating D.H."/>
            <person name="Palm C."/>
            <person name="Peck M.C."/>
            <person name="Surzycki R."/>
            <person name="Wells D.H."/>
            <person name="Yeh K.-C."/>
            <person name="Davis R.W."/>
            <person name="Federspiel N.A."/>
            <person name="Long S.R."/>
        </authorList>
    </citation>
    <scope>NUCLEOTIDE SEQUENCE [LARGE SCALE GENOMIC DNA]</scope>
    <source>
        <strain>1021</strain>
    </source>
</reference>
<reference key="2">
    <citation type="journal article" date="2001" name="Science">
        <title>The composite genome of the legume symbiont Sinorhizobium meliloti.</title>
        <authorList>
            <person name="Galibert F."/>
            <person name="Finan T.M."/>
            <person name="Long S.R."/>
            <person name="Puehler A."/>
            <person name="Abola P."/>
            <person name="Ampe F."/>
            <person name="Barloy-Hubler F."/>
            <person name="Barnett M.J."/>
            <person name="Becker A."/>
            <person name="Boistard P."/>
            <person name="Bothe G."/>
            <person name="Boutry M."/>
            <person name="Bowser L."/>
            <person name="Buhrmester J."/>
            <person name="Cadieu E."/>
            <person name="Capela D."/>
            <person name="Chain P."/>
            <person name="Cowie A."/>
            <person name="Davis R.W."/>
            <person name="Dreano S."/>
            <person name="Federspiel N.A."/>
            <person name="Fisher R.F."/>
            <person name="Gloux S."/>
            <person name="Godrie T."/>
            <person name="Goffeau A."/>
            <person name="Golding B."/>
            <person name="Gouzy J."/>
            <person name="Gurjal M."/>
            <person name="Hernandez-Lucas I."/>
            <person name="Hong A."/>
            <person name="Huizar L."/>
            <person name="Hyman R.W."/>
            <person name="Jones T."/>
            <person name="Kahn D."/>
            <person name="Kahn M.L."/>
            <person name="Kalman S."/>
            <person name="Keating D.H."/>
            <person name="Kiss E."/>
            <person name="Komp C."/>
            <person name="Lelaure V."/>
            <person name="Masuy D."/>
            <person name="Palm C."/>
            <person name="Peck M.C."/>
            <person name="Pohl T.M."/>
            <person name="Portetelle D."/>
            <person name="Purnelle B."/>
            <person name="Ramsperger U."/>
            <person name="Surzycki R."/>
            <person name="Thebault P."/>
            <person name="Vandenbol M."/>
            <person name="Vorhoelter F.J."/>
            <person name="Weidner S."/>
            <person name="Wells D.H."/>
            <person name="Wong K."/>
            <person name="Yeh K.-C."/>
            <person name="Batut J."/>
        </authorList>
    </citation>
    <scope>NUCLEOTIDE SEQUENCE [LARGE SCALE GENOMIC DNA]</scope>
    <source>
        <strain>1021</strain>
    </source>
</reference>